<sequence>MSDINATRLPIFWFIYFPCVGDNVDNTLTRGER</sequence>
<reference key="1">
    <citation type="journal article" date="2014" name="Toxicon">
        <title>The molecular diversity of toxin gene families in lethal Amanita mushrooms.</title>
        <authorList>
            <person name="Li P."/>
            <person name="Deng W."/>
            <person name="Li T."/>
        </authorList>
    </citation>
    <scope>NUCLEOTIDE SEQUENCE [GENOMIC DNA]</scope>
    <scope>FUNCTION</scope>
</reference>
<organism>
    <name type="scientific">Amanita phalloides</name>
    <name type="common">Death cap</name>
    <dbReference type="NCBI Taxonomy" id="67723"/>
    <lineage>
        <taxon>Eukaryota</taxon>
        <taxon>Fungi</taxon>
        <taxon>Dikarya</taxon>
        <taxon>Basidiomycota</taxon>
        <taxon>Agaricomycotina</taxon>
        <taxon>Agaricomycetes</taxon>
        <taxon>Agaricomycetidae</taxon>
        <taxon>Agaricales</taxon>
        <taxon>Pluteineae</taxon>
        <taxon>Amanitaceae</taxon>
        <taxon>Amanita</taxon>
    </lineage>
</organism>
<evidence type="ECO:0000250" key="1">
    <source>
        <dbReference type="UniProtKB" id="A0A067SLB9"/>
    </source>
</evidence>
<evidence type="ECO:0000303" key="2">
    <source>
    </source>
</evidence>
<evidence type="ECO:0000305" key="3"/>
<evidence type="ECO:0000305" key="4">
    <source>
    </source>
</evidence>
<protein>
    <recommendedName>
        <fullName evidence="2">MSDIN-like toxin proprotein 5</fullName>
    </recommendedName>
    <component>
        <recommendedName>
            <fullName evidence="4">Toxin MSD5</fullName>
        </recommendedName>
    </component>
</protein>
<proteinExistence type="inferred from homology"/>
<keyword id="KW-0800">Toxin</keyword>
<feature type="propeptide" id="PRO_0000443683" evidence="4">
    <location>
        <begin position="1"/>
        <end position="10"/>
    </location>
</feature>
<feature type="peptide" id="PRO_0000443684" description="Toxin MSD5" evidence="4">
    <location>
        <begin position="11"/>
        <end position="18"/>
    </location>
</feature>
<feature type="propeptide" id="PRO_0000443685" evidence="4">
    <location>
        <begin position="19"/>
        <end position="32"/>
    </location>
</feature>
<feature type="cross-link" description="Cyclopeptide (Ile-Pro)" evidence="4">
    <location>
        <begin position="11"/>
        <end position="18"/>
    </location>
</feature>
<name>MSD5_AMAPH</name>
<accession>A0A023IWI5</accession>
<comment type="function">
    <text evidence="4">Probable toxin that belongs to the MSDIN-like toxin family responsible for a large number of food poisoning cases and deaths (PubMed:24613547).</text>
</comment>
<comment type="PTM">
    <text evidence="1">Processed by the macrocyclase-peptidase enzyme POPB to yield a toxic cyclic octapeptide (By similarity). POPB first removes 10 residues from the N-terminus (By similarity). Conformational trapping of the remaining peptide forces the enzyme to release this intermediate rather than proceed to macrocyclization (By similarity). The enzyme rebinds the remaining peptide in a different conformation and catalyzes macrocyclization of the N-terminal 8 residues (By similarity).</text>
</comment>
<comment type="similarity">
    <text evidence="3">Belongs to the MSDIN fungal toxin family.</text>
</comment>
<dbReference type="EMBL" id="KF552083">
    <property type="protein sequence ID" value="AHB18711.1"/>
    <property type="molecule type" value="Genomic_DNA"/>
</dbReference>
<dbReference type="GO" id="GO:0090729">
    <property type="term" value="F:toxin activity"/>
    <property type="evidence" value="ECO:0007669"/>
    <property type="project" value="UniProtKB-KW"/>
</dbReference>
<dbReference type="InterPro" id="IPR027582">
    <property type="entry name" value="Amanitin/phalloidin"/>
</dbReference>
<dbReference type="NCBIfam" id="TIGR04309">
    <property type="entry name" value="amanitin"/>
    <property type="match status" value="1"/>
</dbReference>